<name>PROF_ACTDE</name>
<keyword id="KW-0009">Actin-binding</keyword>
<keyword id="KW-0020">Allergen</keyword>
<keyword id="KW-0963">Cytoplasm</keyword>
<keyword id="KW-0206">Cytoskeleton</keyword>
<keyword id="KW-1015">Disulfide bond</keyword>
<protein>
    <recommendedName>
        <fullName evidence="5">Profilin</fullName>
    </recommendedName>
    <allergenName evidence="5">Act d 9</allergenName>
</protein>
<feature type="initiator methionine" description="Removed" evidence="2">
    <location>
        <position position="1"/>
    </location>
</feature>
<feature type="chain" id="PRO_0000444429" description="Profilin" evidence="6">
    <location>
        <begin position="2"/>
        <end position="109" status="greater than"/>
    </location>
</feature>
<feature type="disulfide bond" evidence="1">
    <location>
        <begin position="13"/>
        <end status="unknown"/>
    </location>
</feature>
<feature type="non-terminal residue" evidence="6">
    <location>
        <position position="109"/>
    </location>
</feature>
<evidence type="ECO:0000250" key="1">
    <source>
        <dbReference type="UniProtKB" id="P35081"/>
    </source>
</evidence>
<evidence type="ECO:0000250" key="2">
    <source>
        <dbReference type="UniProtKB" id="Q8H2C9"/>
    </source>
</evidence>
<evidence type="ECO:0000269" key="3">
    <source>
    </source>
</evidence>
<evidence type="ECO:0000269" key="4">
    <source>
    </source>
</evidence>
<evidence type="ECO:0000303" key="5">
    <source>
    </source>
</evidence>
<evidence type="ECO:0000305" key="6"/>
<accession>C0HL99</accession>
<comment type="function">
    <text evidence="1">Binds to actin and affects the structure of the cytoskeleton. At high concentrations, profilin prevents the polymerization of actin, whereas it enhances it at low concentrations. By binding to PIP2, it inhibits the formation of IP3 and DG.</text>
</comment>
<comment type="subunit">
    <text evidence="1">Multimer. Occurs in many kinds of cells as a complex with monomeric actin in a 1:1 ratio.</text>
</comment>
<comment type="subcellular location">
    <subcellularLocation>
        <location evidence="1">Cytoplasm</location>
        <location evidence="1">Cytoskeleton</location>
    </subcellularLocation>
</comment>
<comment type="allergen">
    <text evidence="3 4">Causes an allergic reaction in human (PubMed:20061012, PubMed:21083775). Binds to IgE (PubMed:20061012, PubMed:21083775).</text>
</comment>
<comment type="similarity">
    <text evidence="6">Belongs to the profilin family.</text>
</comment>
<organism evidence="5">
    <name type="scientific">Actinidia deliciosa</name>
    <name type="common">Kiwi</name>
    <dbReference type="NCBI Taxonomy" id="3627"/>
    <lineage>
        <taxon>Eukaryota</taxon>
        <taxon>Viridiplantae</taxon>
        <taxon>Streptophyta</taxon>
        <taxon>Embryophyta</taxon>
        <taxon>Tracheophyta</taxon>
        <taxon>Spermatophyta</taxon>
        <taxon>Magnoliopsida</taxon>
        <taxon>eudicotyledons</taxon>
        <taxon>Gunneridae</taxon>
        <taxon>Pentapetalae</taxon>
        <taxon>asterids</taxon>
        <taxon>Ericales</taxon>
        <taxon>Actinidiaceae</taxon>
        <taxon>Actinidia</taxon>
    </lineage>
</organism>
<proteinExistence type="evidence at protein level"/>
<sequence>MSWQTYVDDHLMCEIEGNYLTSAAIIGQDGSIWAQSASFPQFKPEEITAIMNDFSEPGTLAPTGLYLGGTKYMVIQGEAGAVIRGKKGPGGVTVKKTNQALIIGIYDEP</sequence>
<dbReference type="EMBL" id="FG438715">
    <property type="status" value="NOT_ANNOTATED_CDS"/>
    <property type="molecule type" value="mRNA"/>
</dbReference>
<dbReference type="SMR" id="C0HL99"/>
<dbReference type="Allergome" id="5740">
    <property type="allergen name" value="Act d 9"/>
</dbReference>
<dbReference type="Allergome" id="5741">
    <property type="allergen name" value="Act d 9.0101"/>
</dbReference>
<dbReference type="GO" id="GO:0005938">
    <property type="term" value="C:cell cortex"/>
    <property type="evidence" value="ECO:0007669"/>
    <property type="project" value="TreeGrafter"/>
</dbReference>
<dbReference type="GO" id="GO:0005856">
    <property type="term" value="C:cytoskeleton"/>
    <property type="evidence" value="ECO:0007669"/>
    <property type="project" value="UniProtKB-SubCell"/>
</dbReference>
<dbReference type="GO" id="GO:0003785">
    <property type="term" value="F:actin monomer binding"/>
    <property type="evidence" value="ECO:0007669"/>
    <property type="project" value="TreeGrafter"/>
</dbReference>
<dbReference type="CDD" id="cd00148">
    <property type="entry name" value="PROF"/>
    <property type="match status" value="1"/>
</dbReference>
<dbReference type="FunFam" id="3.30.450.30:FF:000001">
    <property type="entry name" value="Profilin"/>
    <property type="match status" value="1"/>
</dbReference>
<dbReference type="Gene3D" id="3.30.450.30">
    <property type="entry name" value="Dynein light chain 2a, cytoplasmic"/>
    <property type="match status" value="1"/>
</dbReference>
<dbReference type="InterPro" id="IPR048278">
    <property type="entry name" value="PFN"/>
</dbReference>
<dbReference type="InterPro" id="IPR005455">
    <property type="entry name" value="PFN_euk"/>
</dbReference>
<dbReference type="InterPro" id="IPR036140">
    <property type="entry name" value="PFN_sf"/>
</dbReference>
<dbReference type="InterPro" id="IPR027310">
    <property type="entry name" value="Profilin_CS"/>
</dbReference>
<dbReference type="PANTHER" id="PTHR11604">
    <property type="entry name" value="PROFILIN"/>
    <property type="match status" value="1"/>
</dbReference>
<dbReference type="PANTHER" id="PTHR11604:SF59">
    <property type="entry name" value="PROFILIN"/>
    <property type="match status" value="1"/>
</dbReference>
<dbReference type="Pfam" id="PF00235">
    <property type="entry name" value="Profilin"/>
    <property type="match status" value="1"/>
</dbReference>
<dbReference type="PRINTS" id="PR00392">
    <property type="entry name" value="PROFILIN"/>
</dbReference>
<dbReference type="PRINTS" id="PR01640">
    <property type="entry name" value="PROFILINPLNT"/>
</dbReference>
<dbReference type="SMART" id="SM00392">
    <property type="entry name" value="PROF"/>
    <property type="match status" value="1"/>
</dbReference>
<dbReference type="SUPFAM" id="SSF55770">
    <property type="entry name" value="Profilin (actin-binding protein)"/>
    <property type="match status" value="1"/>
</dbReference>
<dbReference type="PROSITE" id="PS00414">
    <property type="entry name" value="PROFILIN"/>
    <property type="match status" value="1"/>
</dbReference>
<reference evidence="6" key="1">
    <citation type="journal article" date="2010" name="J. Allergy Clin. Immunol.">
        <title>Component-resolved diagnosis of kiwifruit allergy with purified natural and recombinant kiwifruit allergens.</title>
        <authorList>
            <person name="Bublin M."/>
            <person name="Pfister M."/>
            <person name="Radauer C."/>
            <person name="Oberhuber C."/>
            <person name="Bulley S."/>
            <person name="Dewitt A.M."/>
            <person name="Lidholm J."/>
            <person name="Reese G."/>
            <person name="Vieths S."/>
            <person name="Breiteneder H."/>
            <person name="Hoffmann-Sommergruber K."/>
            <person name="Ballmer-Weber B.K."/>
        </authorList>
    </citation>
    <scope>NUCLEOTIDE SEQUENCE [MRNA]</scope>
    <scope>ALLERGEN</scope>
</reference>
<reference evidence="6" key="2">
    <citation type="journal article" date="2011" name="Clin. Exp. Allergy">
        <title>The performance of a component-based allergen microarray for the diagnosis of kiwifruit allergy.</title>
        <authorList>
            <person name="Bublin M."/>
            <person name="Dennstedt S."/>
            <person name="Buchegger M."/>
            <person name="Antonietta Ciardiello M."/>
            <person name="Bernardi M.L."/>
            <person name="Tuppo L."/>
            <person name="Harwanegg C."/>
            <person name="Hafner C."/>
            <person name="Ebner C."/>
            <person name="Ballmer-Weber B.K."/>
            <person name="Knulst A."/>
            <person name="Hoffmann-Sommergruber K."/>
            <person name="Radauer C."/>
            <person name="Mari A."/>
            <person name="Breiteneder H."/>
        </authorList>
    </citation>
    <scope>ALLERGEN</scope>
</reference>